<feature type="chain" id="PRO_1000070232" description="Beta-ketoacyl-[acyl-carrier-protein] synthase III">
    <location>
        <begin position="1"/>
        <end position="328"/>
    </location>
</feature>
<feature type="region of interest" description="ACP-binding" evidence="1">
    <location>
        <begin position="256"/>
        <end position="260"/>
    </location>
</feature>
<feature type="active site" evidence="1">
    <location>
        <position position="122"/>
    </location>
</feature>
<feature type="active site" evidence="1">
    <location>
        <position position="255"/>
    </location>
</feature>
<feature type="active site" evidence="1">
    <location>
        <position position="285"/>
    </location>
</feature>
<proteinExistence type="inferred from homology"/>
<dbReference type="EC" id="2.3.1.180" evidence="1"/>
<dbReference type="EMBL" id="CU207211">
    <property type="protein sequence ID" value="CAL62219.1"/>
    <property type="molecule type" value="Genomic_DNA"/>
</dbReference>
<dbReference type="SMR" id="A4G6T2"/>
<dbReference type="STRING" id="204773.HEAR2077"/>
<dbReference type="KEGG" id="har:HEAR2077"/>
<dbReference type="eggNOG" id="COG0332">
    <property type="taxonomic scope" value="Bacteria"/>
</dbReference>
<dbReference type="HOGENOM" id="CLU_039592_3_1_4"/>
<dbReference type="OrthoDB" id="9815506at2"/>
<dbReference type="UniPathway" id="UPA00094"/>
<dbReference type="Proteomes" id="UP000006697">
    <property type="component" value="Chromosome"/>
</dbReference>
<dbReference type="GO" id="GO:0005737">
    <property type="term" value="C:cytoplasm"/>
    <property type="evidence" value="ECO:0007669"/>
    <property type="project" value="UniProtKB-SubCell"/>
</dbReference>
<dbReference type="GO" id="GO:0004315">
    <property type="term" value="F:3-oxoacyl-[acyl-carrier-protein] synthase activity"/>
    <property type="evidence" value="ECO:0007669"/>
    <property type="project" value="InterPro"/>
</dbReference>
<dbReference type="GO" id="GO:0033818">
    <property type="term" value="F:beta-ketoacyl-acyl-carrier-protein synthase III activity"/>
    <property type="evidence" value="ECO:0007669"/>
    <property type="project" value="UniProtKB-UniRule"/>
</dbReference>
<dbReference type="GO" id="GO:0006633">
    <property type="term" value="P:fatty acid biosynthetic process"/>
    <property type="evidence" value="ECO:0007669"/>
    <property type="project" value="UniProtKB-UniRule"/>
</dbReference>
<dbReference type="CDD" id="cd00830">
    <property type="entry name" value="KAS_III"/>
    <property type="match status" value="1"/>
</dbReference>
<dbReference type="FunFam" id="3.40.47.10:FF:000004">
    <property type="entry name" value="3-oxoacyl-[acyl-carrier-protein] synthase 3"/>
    <property type="match status" value="1"/>
</dbReference>
<dbReference type="Gene3D" id="3.40.47.10">
    <property type="match status" value="1"/>
</dbReference>
<dbReference type="HAMAP" id="MF_01815">
    <property type="entry name" value="FabH"/>
    <property type="match status" value="1"/>
</dbReference>
<dbReference type="InterPro" id="IPR013747">
    <property type="entry name" value="ACP_syn_III_C"/>
</dbReference>
<dbReference type="InterPro" id="IPR013751">
    <property type="entry name" value="ACP_syn_III_N"/>
</dbReference>
<dbReference type="InterPro" id="IPR004655">
    <property type="entry name" value="FabH"/>
</dbReference>
<dbReference type="InterPro" id="IPR016039">
    <property type="entry name" value="Thiolase-like"/>
</dbReference>
<dbReference type="NCBIfam" id="TIGR00747">
    <property type="entry name" value="fabH"/>
    <property type="match status" value="1"/>
</dbReference>
<dbReference type="NCBIfam" id="NF006829">
    <property type="entry name" value="PRK09352.1"/>
    <property type="match status" value="1"/>
</dbReference>
<dbReference type="PANTHER" id="PTHR43091">
    <property type="entry name" value="3-OXOACYL-[ACYL-CARRIER-PROTEIN] SYNTHASE"/>
    <property type="match status" value="1"/>
</dbReference>
<dbReference type="PANTHER" id="PTHR43091:SF1">
    <property type="entry name" value="BETA-KETOACYL-[ACYL-CARRIER-PROTEIN] SYNTHASE III, CHLOROPLASTIC"/>
    <property type="match status" value="1"/>
</dbReference>
<dbReference type="Pfam" id="PF08545">
    <property type="entry name" value="ACP_syn_III"/>
    <property type="match status" value="1"/>
</dbReference>
<dbReference type="Pfam" id="PF08541">
    <property type="entry name" value="ACP_syn_III_C"/>
    <property type="match status" value="1"/>
</dbReference>
<dbReference type="SUPFAM" id="SSF53901">
    <property type="entry name" value="Thiolase-like"/>
    <property type="match status" value="1"/>
</dbReference>
<accession>A4G6T2</accession>
<evidence type="ECO:0000255" key="1">
    <source>
        <dbReference type="HAMAP-Rule" id="MF_01815"/>
    </source>
</evidence>
<gene>
    <name evidence="1" type="primary">fabH</name>
    <name type="ordered locus">HEAR2077</name>
</gene>
<comment type="function">
    <text evidence="1">Catalyzes the condensation reaction of fatty acid synthesis by the addition to an acyl acceptor of two carbons from malonyl-ACP. Catalyzes the first condensation reaction which initiates fatty acid synthesis and may therefore play a role in governing the total rate of fatty acid production. Possesses both acetoacetyl-ACP synthase and acetyl transacylase activities. Its substrate specificity determines the biosynthesis of branched-chain and/or straight-chain of fatty acids.</text>
</comment>
<comment type="catalytic activity">
    <reaction evidence="1">
        <text>malonyl-[ACP] + acetyl-CoA + H(+) = 3-oxobutanoyl-[ACP] + CO2 + CoA</text>
        <dbReference type="Rhea" id="RHEA:12080"/>
        <dbReference type="Rhea" id="RHEA-COMP:9623"/>
        <dbReference type="Rhea" id="RHEA-COMP:9625"/>
        <dbReference type="ChEBI" id="CHEBI:15378"/>
        <dbReference type="ChEBI" id="CHEBI:16526"/>
        <dbReference type="ChEBI" id="CHEBI:57287"/>
        <dbReference type="ChEBI" id="CHEBI:57288"/>
        <dbReference type="ChEBI" id="CHEBI:78449"/>
        <dbReference type="ChEBI" id="CHEBI:78450"/>
        <dbReference type="EC" id="2.3.1.180"/>
    </reaction>
</comment>
<comment type="pathway">
    <text evidence="1">Lipid metabolism; fatty acid biosynthesis.</text>
</comment>
<comment type="subunit">
    <text evidence="1">Homodimer.</text>
</comment>
<comment type="subcellular location">
    <subcellularLocation>
        <location evidence="1">Cytoplasm</location>
    </subcellularLocation>
</comment>
<comment type="domain">
    <text evidence="1">The last Arg residue of the ACP-binding site is essential for the weak association between ACP/AcpP and FabH.</text>
</comment>
<comment type="similarity">
    <text evidence="1">Belongs to the thiolase-like superfamily. FabH family.</text>
</comment>
<sequence>MTLYSKIIGTGSYLPPNRVTNQDLIERLALDGIETSDEWIVSRSGISARHYADADMQSSDLAVEAAKRALDMAKLAANDIDLIILATSTPDFFGGFPSTACVVQRKLGVTNGCAAVDVQAVCSGFVYALATADKFIKSGSHKNVLVIGAEVFSRIIDFKDRTTCVLFGDGSGAVVMTASEEPGVLATKLHADGSYGDILCGPGRISNGVLEGSAFMYMDGQAVFKLAIGLLDKVANEVLQLAKMDASEVDWIVPHQANIRIMQGTAKKLGLSMDKMIVTVDQHGNTSAASIPMALDVGVRDGRIKPGQNVMMEGVGGGFTWGAVLARM</sequence>
<name>FABH_HERAR</name>
<protein>
    <recommendedName>
        <fullName evidence="1">Beta-ketoacyl-[acyl-carrier-protein] synthase III</fullName>
        <shortName evidence="1">Beta-ketoacyl-ACP synthase III</shortName>
        <shortName evidence="1">KAS III</shortName>
        <ecNumber evidence="1">2.3.1.180</ecNumber>
    </recommendedName>
    <alternativeName>
        <fullName evidence="1">3-oxoacyl-[acyl-carrier-protein] synthase 3</fullName>
    </alternativeName>
    <alternativeName>
        <fullName evidence="1">3-oxoacyl-[acyl-carrier-protein] synthase III</fullName>
    </alternativeName>
</protein>
<organism>
    <name type="scientific">Herminiimonas arsenicoxydans</name>
    <dbReference type="NCBI Taxonomy" id="204773"/>
    <lineage>
        <taxon>Bacteria</taxon>
        <taxon>Pseudomonadati</taxon>
        <taxon>Pseudomonadota</taxon>
        <taxon>Betaproteobacteria</taxon>
        <taxon>Burkholderiales</taxon>
        <taxon>Oxalobacteraceae</taxon>
        <taxon>Herminiimonas</taxon>
    </lineage>
</organism>
<reference key="1">
    <citation type="journal article" date="2007" name="PLoS Genet.">
        <title>A tale of two oxidation states: bacterial colonization of arsenic-rich environments.</title>
        <authorList>
            <person name="Muller D."/>
            <person name="Medigue C."/>
            <person name="Koechler S."/>
            <person name="Barbe V."/>
            <person name="Barakat M."/>
            <person name="Talla E."/>
            <person name="Bonnefoy V."/>
            <person name="Krin E."/>
            <person name="Arsene-Ploetze F."/>
            <person name="Carapito C."/>
            <person name="Chandler M."/>
            <person name="Cournoyer B."/>
            <person name="Cruveiller S."/>
            <person name="Dossat C."/>
            <person name="Duval S."/>
            <person name="Heymann M."/>
            <person name="Leize E."/>
            <person name="Lieutaud A."/>
            <person name="Lievremont D."/>
            <person name="Makita Y."/>
            <person name="Mangenot S."/>
            <person name="Nitschke W."/>
            <person name="Ortet P."/>
            <person name="Perdrial N."/>
            <person name="Schoepp B."/>
            <person name="Siguier P."/>
            <person name="Simeonova D.D."/>
            <person name="Rouy Z."/>
            <person name="Segurens B."/>
            <person name="Turlin E."/>
            <person name="Vallenet D."/>
            <person name="van Dorsselaer A."/>
            <person name="Weiss S."/>
            <person name="Weissenbach J."/>
            <person name="Lett M.-C."/>
            <person name="Danchin A."/>
            <person name="Bertin P.N."/>
        </authorList>
    </citation>
    <scope>NUCLEOTIDE SEQUENCE [LARGE SCALE GENOMIC DNA]</scope>
    <source>
        <strain>ULPAs1</strain>
    </source>
</reference>
<keyword id="KW-0012">Acyltransferase</keyword>
<keyword id="KW-0963">Cytoplasm</keyword>
<keyword id="KW-0275">Fatty acid biosynthesis</keyword>
<keyword id="KW-0276">Fatty acid metabolism</keyword>
<keyword id="KW-0444">Lipid biosynthesis</keyword>
<keyword id="KW-0443">Lipid metabolism</keyword>
<keyword id="KW-0511">Multifunctional enzyme</keyword>
<keyword id="KW-1185">Reference proteome</keyword>
<keyword id="KW-0808">Transferase</keyword>